<organism>
    <name type="scientific">Thermosynechococcus vestitus (strain NIES-2133 / IAM M-273 / BP-1)</name>
    <dbReference type="NCBI Taxonomy" id="197221"/>
    <lineage>
        <taxon>Bacteria</taxon>
        <taxon>Bacillati</taxon>
        <taxon>Cyanobacteriota</taxon>
        <taxon>Cyanophyceae</taxon>
        <taxon>Acaryochloridales</taxon>
        <taxon>Thermosynechococcaceae</taxon>
        <taxon>Thermosynechococcus</taxon>
    </lineage>
</organism>
<dbReference type="EC" id="4.1.99.17" evidence="1"/>
<dbReference type="EMBL" id="BA000039">
    <property type="protein sequence ID" value="BAC07886.1"/>
    <property type="molecule type" value="Genomic_DNA"/>
</dbReference>
<dbReference type="RefSeq" id="NP_681124.1">
    <property type="nucleotide sequence ID" value="NC_004113.1"/>
</dbReference>
<dbReference type="SMR" id="Q8DLZ2"/>
<dbReference type="STRING" id="197221.gene:10746917"/>
<dbReference type="EnsemblBacteria" id="BAC07886">
    <property type="protein sequence ID" value="BAC07886"/>
    <property type="gene ID" value="BAC07886"/>
</dbReference>
<dbReference type="KEGG" id="tel:tlr0334"/>
<dbReference type="PATRIC" id="fig|197221.4.peg.351"/>
<dbReference type="eggNOG" id="COG0422">
    <property type="taxonomic scope" value="Bacteria"/>
</dbReference>
<dbReference type="UniPathway" id="UPA00060"/>
<dbReference type="Proteomes" id="UP000000440">
    <property type="component" value="Chromosome"/>
</dbReference>
<dbReference type="GO" id="GO:0005829">
    <property type="term" value="C:cytosol"/>
    <property type="evidence" value="ECO:0007669"/>
    <property type="project" value="TreeGrafter"/>
</dbReference>
<dbReference type="GO" id="GO:0051539">
    <property type="term" value="F:4 iron, 4 sulfur cluster binding"/>
    <property type="evidence" value="ECO:0007669"/>
    <property type="project" value="UniProtKB-KW"/>
</dbReference>
<dbReference type="GO" id="GO:0016830">
    <property type="term" value="F:carbon-carbon lyase activity"/>
    <property type="evidence" value="ECO:0007669"/>
    <property type="project" value="InterPro"/>
</dbReference>
<dbReference type="GO" id="GO:0008270">
    <property type="term" value="F:zinc ion binding"/>
    <property type="evidence" value="ECO:0007669"/>
    <property type="project" value="UniProtKB-UniRule"/>
</dbReference>
<dbReference type="GO" id="GO:0009228">
    <property type="term" value="P:thiamine biosynthetic process"/>
    <property type="evidence" value="ECO:0007669"/>
    <property type="project" value="UniProtKB-KW"/>
</dbReference>
<dbReference type="GO" id="GO:0009229">
    <property type="term" value="P:thiamine diphosphate biosynthetic process"/>
    <property type="evidence" value="ECO:0007669"/>
    <property type="project" value="UniProtKB-UniRule"/>
</dbReference>
<dbReference type="FunFam" id="3.20.20.540:FF:000001">
    <property type="entry name" value="Phosphomethylpyrimidine synthase"/>
    <property type="match status" value="1"/>
</dbReference>
<dbReference type="Gene3D" id="6.10.250.620">
    <property type="match status" value="1"/>
</dbReference>
<dbReference type="Gene3D" id="3.20.20.540">
    <property type="entry name" value="Radical SAM ThiC family, central domain"/>
    <property type="match status" value="1"/>
</dbReference>
<dbReference type="HAMAP" id="MF_00089">
    <property type="entry name" value="ThiC"/>
    <property type="match status" value="1"/>
</dbReference>
<dbReference type="InterPro" id="IPR037509">
    <property type="entry name" value="ThiC"/>
</dbReference>
<dbReference type="InterPro" id="IPR038521">
    <property type="entry name" value="ThiC/Bza_core_dom"/>
</dbReference>
<dbReference type="InterPro" id="IPR002817">
    <property type="entry name" value="ThiC/BzaA/B"/>
</dbReference>
<dbReference type="NCBIfam" id="NF006763">
    <property type="entry name" value="PRK09284.1"/>
    <property type="match status" value="1"/>
</dbReference>
<dbReference type="NCBIfam" id="NF009895">
    <property type="entry name" value="PRK13352.1"/>
    <property type="match status" value="1"/>
</dbReference>
<dbReference type="NCBIfam" id="TIGR00190">
    <property type="entry name" value="thiC"/>
    <property type="match status" value="1"/>
</dbReference>
<dbReference type="PANTHER" id="PTHR30557:SF1">
    <property type="entry name" value="PHOSPHOMETHYLPYRIMIDINE SYNTHASE, CHLOROPLASTIC"/>
    <property type="match status" value="1"/>
</dbReference>
<dbReference type="PANTHER" id="PTHR30557">
    <property type="entry name" value="THIAMINE BIOSYNTHESIS PROTEIN THIC"/>
    <property type="match status" value="1"/>
</dbReference>
<dbReference type="Pfam" id="PF01964">
    <property type="entry name" value="ThiC_Rad_SAM"/>
    <property type="match status" value="1"/>
</dbReference>
<dbReference type="SFLD" id="SFLDF00407">
    <property type="entry name" value="phosphomethylpyrimidine_syntha"/>
    <property type="match status" value="1"/>
</dbReference>
<dbReference type="SFLD" id="SFLDG01114">
    <property type="entry name" value="phosphomethylpyrimidine_syntha"/>
    <property type="match status" value="1"/>
</dbReference>
<dbReference type="SFLD" id="SFLDS00113">
    <property type="entry name" value="Radical_SAM_Phosphomethylpyrim"/>
    <property type="match status" value="1"/>
</dbReference>
<proteinExistence type="inferred from homology"/>
<keyword id="KW-0004">4Fe-4S</keyword>
<keyword id="KW-0408">Iron</keyword>
<keyword id="KW-0411">Iron-sulfur</keyword>
<keyword id="KW-0456">Lyase</keyword>
<keyword id="KW-0479">Metal-binding</keyword>
<keyword id="KW-1185">Reference proteome</keyword>
<keyword id="KW-0949">S-adenosyl-L-methionine</keyword>
<keyword id="KW-0784">Thiamine biosynthesis</keyword>
<keyword id="KW-0862">Zinc</keyword>
<evidence type="ECO:0000255" key="1">
    <source>
        <dbReference type="HAMAP-Rule" id="MF_00089"/>
    </source>
</evidence>
<sequence>MVRSEWIAARKGHDNVTQMHYARQGIITEEMHYVAQRENLPPELIRDEVARGRMIIPANINHPNLEPMAIGIAAKCKVNANIGASPNSSNLEEELAKLRLAVKYGADTVMDLSTGGGDLDAIRTAIINASPVPIGTVPVYQALESVHGSVERLTPDDFLHVIEKHAQQGVDYMTIHAGLLIEYLPLVKNRITGIVSRGGGILAKWMLYHHKQNPLYTHFRDIIEIFKKYDVSFSLGDSLRPGCLHDASDEAQLAELKTLGQLTRKAWEHDVQVMVEGPGHVPMDQIEFNVRKQMEECSEAPFYVLGPLVTDIAPGYDHITSAIGAALAGWYGTAMLCYVTPKEHLGLPNAEDVRNGLIAYKIAAHAADIARHRPGARDRDDELSRARYNFDWNRQFELALDPERAREYHDETLPADIYKTAEFCSMCGPKFCPMQTKVDAEALAELEKFLAKDKDQVSASA</sequence>
<gene>
    <name evidence="1" type="primary">thiC</name>
    <name type="ordered locus">tlr0334</name>
</gene>
<accession>Q8DLZ2</accession>
<name>THIC_THEVB</name>
<reference key="1">
    <citation type="journal article" date="2002" name="DNA Res.">
        <title>Complete genome structure of the thermophilic cyanobacterium Thermosynechococcus elongatus BP-1.</title>
        <authorList>
            <person name="Nakamura Y."/>
            <person name="Kaneko T."/>
            <person name="Sato S."/>
            <person name="Ikeuchi M."/>
            <person name="Katoh H."/>
            <person name="Sasamoto S."/>
            <person name="Watanabe A."/>
            <person name="Iriguchi M."/>
            <person name="Kawashima K."/>
            <person name="Kimura T."/>
            <person name="Kishida Y."/>
            <person name="Kiyokawa C."/>
            <person name="Kohara M."/>
            <person name="Matsumoto M."/>
            <person name="Matsuno A."/>
            <person name="Nakazaki N."/>
            <person name="Shimpo S."/>
            <person name="Sugimoto M."/>
            <person name="Takeuchi C."/>
            <person name="Yamada M."/>
            <person name="Tabata S."/>
        </authorList>
    </citation>
    <scope>NUCLEOTIDE SEQUENCE [LARGE SCALE GENOMIC DNA]</scope>
    <source>
        <strain>NIES-2133 / IAM M-273 / BP-1</strain>
    </source>
</reference>
<feature type="chain" id="PRO_0000152840" description="Phosphomethylpyrimidine synthase">
    <location>
        <begin position="1"/>
        <end position="461"/>
    </location>
</feature>
<feature type="binding site" evidence="1">
    <location>
        <position position="81"/>
    </location>
    <ligand>
        <name>substrate</name>
    </ligand>
</feature>
<feature type="binding site" evidence="1">
    <location>
        <position position="110"/>
    </location>
    <ligand>
        <name>substrate</name>
    </ligand>
</feature>
<feature type="binding site" evidence="1">
    <location>
        <position position="140"/>
    </location>
    <ligand>
        <name>substrate</name>
    </ligand>
</feature>
<feature type="binding site" evidence="1">
    <location>
        <position position="176"/>
    </location>
    <ligand>
        <name>substrate</name>
    </ligand>
</feature>
<feature type="binding site" evidence="1">
    <location>
        <begin position="196"/>
        <end position="198"/>
    </location>
    <ligand>
        <name>substrate</name>
    </ligand>
</feature>
<feature type="binding site" evidence="1">
    <location>
        <begin position="237"/>
        <end position="240"/>
    </location>
    <ligand>
        <name>substrate</name>
    </ligand>
</feature>
<feature type="binding site" evidence="1">
    <location>
        <position position="276"/>
    </location>
    <ligand>
        <name>substrate</name>
    </ligand>
</feature>
<feature type="binding site" evidence="1">
    <location>
        <position position="280"/>
    </location>
    <ligand>
        <name>Zn(2+)</name>
        <dbReference type="ChEBI" id="CHEBI:29105"/>
    </ligand>
</feature>
<feature type="binding site" evidence="1">
    <location>
        <position position="303"/>
    </location>
    <ligand>
        <name>substrate</name>
    </ligand>
</feature>
<feature type="binding site" evidence="1">
    <location>
        <position position="344"/>
    </location>
    <ligand>
        <name>Zn(2+)</name>
        <dbReference type="ChEBI" id="CHEBI:29105"/>
    </ligand>
</feature>
<feature type="binding site" evidence="1">
    <location>
        <position position="424"/>
    </location>
    <ligand>
        <name>[4Fe-4S] cluster</name>
        <dbReference type="ChEBI" id="CHEBI:49883"/>
        <note>4Fe-4S-S-AdoMet</note>
    </ligand>
</feature>
<feature type="binding site" evidence="1">
    <location>
        <position position="427"/>
    </location>
    <ligand>
        <name>[4Fe-4S] cluster</name>
        <dbReference type="ChEBI" id="CHEBI:49883"/>
        <note>4Fe-4S-S-AdoMet</note>
    </ligand>
</feature>
<feature type="binding site" evidence="1">
    <location>
        <position position="432"/>
    </location>
    <ligand>
        <name>[4Fe-4S] cluster</name>
        <dbReference type="ChEBI" id="CHEBI:49883"/>
        <note>4Fe-4S-S-AdoMet</note>
    </ligand>
</feature>
<protein>
    <recommendedName>
        <fullName evidence="1">Phosphomethylpyrimidine synthase</fullName>
        <ecNumber evidence="1">4.1.99.17</ecNumber>
    </recommendedName>
    <alternativeName>
        <fullName evidence="1">Hydroxymethylpyrimidine phosphate synthase</fullName>
        <shortName evidence="1">HMP-P synthase</shortName>
        <shortName evidence="1">HMP-phosphate synthase</shortName>
        <shortName evidence="1">HMPP synthase</shortName>
    </alternativeName>
    <alternativeName>
        <fullName evidence="1">Thiamine biosynthesis protein ThiC</fullName>
    </alternativeName>
</protein>
<comment type="function">
    <text evidence="1">Catalyzes the synthesis of the hydroxymethylpyrimidine phosphate (HMP-P) moiety of thiamine from aminoimidazole ribotide (AIR) in a radical S-adenosyl-L-methionine (SAM)-dependent reaction.</text>
</comment>
<comment type="catalytic activity">
    <reaction evidence="1">
        <text>5-amino-1-(5-phospho-beta-D-ribosyl)imidazole + S-adenosyl-L-methionine = 4-amino-2-methyl-5-(phosphooxymethyl)pyrimidine + CO + 5'-deoxyadenosine + formate + L-methionine + 3 H(+)</text>
        <dbReference type="Rhea" id="RHEA:24840"/>
        <dbReference type="ChEBI" id="CHEBI:15378"/>
        <dbReference type="ChEBI" id="CHEBI:15740"/>
        <dbReference type="ChEBI" id="CHEBI:17245"/>
        <dbReference type="ChEBI" id="CHEBI:17319"/>
        <dbReference type="ChEBI" id="CHEBI:57844"/>
        <dbReference type="ChEBI" id="CHEBI:58354"/>
        <dbReference type="ChEBI" id="CHEBI:59789"/>
        <dbReference type="ChEBI" id="CHEBI:137981"/>
        <dbReference type="EC" id="4.1.99.17"/>
    </reaction>
</comment>
<comment type="cofactor">
    <cofactor evidence="1">
        <name>[4Fe-4S] cluster</name>
        <dbReference type="ChEBI" id="CHEBI:49883"/>
    </cofactor>
    <text evidence="1">Binds 1 [4Fe-4S] cluster per subunit. The cluster is coordinated with 3 cysteines and an exchangeable S-adenosyl-L-methionine.</text>
</comment>
<comment type="pathway">
    <text evidence="1">Cofactor biosynthesis; thiamine diphosphate biosynthesis.</text>
</comment>
<comment type="similarity">
    <text evidence="1">Belongs to the ThiC family.</text>
</comment>